<reference key="1">
    <citation type="journal article" date="1993" name="Plant Mol. Biol.">
        <title>Molecular cloning and characterization of anther-preferential cDNA encoding a putative actin-depolymerizing factor.</title>
        <authorList>
            <person name="Kim S.-R."/>
            <person name="Kim Y."/>
            <person name="An G."/>
        </authorList>
    </citation>
    <scope>NUCLEOTIDE SEQUENCE [MRNA]</scope>
    <source>
        <tissue>Anther</tissue>
    </source>
</reference>
<accession>P30174</accession>
<comment type="function">
    <text evidence="1">Actin-depolymerizing protein. Severs actin filaments (F-actin) and binds to actin monomers (By similarity).</text>
</comment>
<comment type="tissue specificity">
    <text>Preferentially in mature anther.</text>
</comment>
<comment type="similarity">
    <text evidence="3">Belongs to the actin-binding proteins ADF family.</text>
</comment>
<protein>
    <recommendedName>
        <fullName>Actin-depolymerizing factor</fullName>
        <shortName>ADF</shortName>
    </recommendedName>
</protein>
<sequence length="126" mass="14798">EDNCKLKFLELKKRIFRFIIFRIDGQQVVVEKLGNPQETYDDFTASLPADECRYAVFDFDFTTNENCQKSKIFFIAWSPDSSRVRMKMVYASSKDRFKRELDGIQVELQATDPSEMSFDIIKSRAL</sequence>
<name>ADF_BRANA</name>
<keyword id="KW-0009">Actin-binding</keyword>
<proteinExistence type="evidence at transcript level"/>
<organism>
    <name type="scientific">Brassica napus</name>
    <name type="common">Rape</name>
    <dbReference type="NCBI Taxonomy" id="3708"/>
    <lineage>
        <taxon>Eukaryota</taxon>
        <taxon>Viridiplantae</taxon>
        <taxon>Streptophyta</taxon>
        <taxon>Embryophyta</taxon>
        <taxon>Tracheophyta</taxon>
        <taxon>Spermatophyta</taxon>
        <taxon>Magnoliopsida</taxon>
        <taxon>eudicotyledons</taxon>
        <taxon>Gunneridae</taxon>
        <taxon>Pentapetalae</taxon>
        <taxon>rosids</taxon>
        <taxon>malvids</taxon>
        <taxon>Brassicales</taxon>
        <taxon>Brassicaceae</taxon>
        <taxon>Brassiceae</taxon>
        <taxon>Brassica</taxon>
    </lineage>
</organism>
<evidence type="ECO:0000250" key="1"/>
<evidence type="ECO:0000255" key="2">
    <source>
        <dbReference type="PROSITE-ProRule" id="PRU00599"/>
    </source>
</evidence>
<evidence type="ECO:0000305" key="3"/>
<dbReference type="EMBL" id="Z14109">
    <property type="protein sequence ID" value="CAA78482.1"/>
    <property type="molecule type" value="mRNA"/>
</dbReference>
<dbReference type="PIR" id="S30934">
    <property type="entry name" value="S30934"/>
</dbReference>
<dbReference type="SMR" id="P30174"/>
<dbReference type="GO" id="GO:0015629">
    <property type="term" value="C:actin cytoskeleton"/>
    <property type="evidence" value="ECO:0007669"/>
    <property type="project" value="InterPro"/>
</dbReference>
<dbReference type="GO" id="GO:0003779">
    <property type="term" value="F:actin binding"/>
    <property type="evidence" value="ECO:0007669"/>
    <property type="project" value="UniProtKB-KW"/>
</dbReference>
<dbReference type="GO" id="GO:0030042">
    <property type="term" value="P:actin filament depolymerization"/>
    <property type="evidence" value="ECO:0007669"/>
    <property type="project" value="InterPro"/>
</dbReference>
<dbReference type="CDD" id="cd11286">
    <property type="entry name" value="ADF_cofilin_like"/>
    <property type="match status" value="1"/>
</dbReference>
<dbReference type="FunFam" id="3.40.20.10:FF:000025">
    <property type="entry name" value="Actin-depolymerizing factor 2"/>
    <property type="match status" value="1"/>
</dbReference>
<dbReference type="Gene3D" id="3.40.20.10">
    <property type="entry name" value="Severin"/>
    <property type="match status" value="1"/>
</dbReference>
<dbReference type="InterPro" id="IPR002108">
    <property type="entry name" value="ADF-H"/>
</dbReference>
<dbReference type="InterPro" id="IPR029006">
    <property type="entry name" value="ADF-H/Gelsolin-like_dom_sf"/>
</dbReference>
<dbReference type="InterPro" id="IPR017904">
    <property type="entry name" value="ADF/Cofilin"/>
</dbReference>
<dbReference type="PANTHER" id="PTHR11913">
    <property type="entry name" value="COFILIN-RELATED"/>
    <property type="match status" value="1"/>
</dbReference>
<dbReference type="Pfam" id="PF00241">
    <property type="entry name" value="Cofilin_ADF"/>
    <property type="match status" value="1"/>
</dbReference>
<dbReference type="SMART" id="SM00102">
    <property type="entry name" value="ADF"/>
    <property type="match status" value="1"/>
</dbReference>
<dbReference type="SUPFAM" id="SSF55753">
    <property type="entry name" value="Actin depolymerizing proteins"/>
    <property type="match status" value="1"/>
</dbReference>
<dbReference type="PROSITE" id="PS51263">
    <property type="entry name" value="ADF_H"/>
    <property type="match status" value="1"/>
</dbReference>
<feature type="chain" id="PRO_0000214930" description="Actin-depolymerizing factor">
    <location>
        <begin position="1" status="less than"/>
        <end position="126"/>
    </location>
</feature>
<feature type="domain" description="ADF-H" evidence="2">
    <location>
        <begin position="1" status="less than"/>
        <end position="126"/>
    </location>
</feature>
<feature type="non-terminal residue">
    <location>
        <position position="1"/>
    </location>
</feature>